<protein>
    <recommendedName>
        <fullName evidence="1">Large ribosomal subunit protein uL6</fullName>
    </recommendedName>
    <alternativeName>
        <fullName evidence="2">50S ribosomal protein L6</fullName>
    </alternativeName>
</protein>
<gene>
    <name evidence="1" type="primary">rplF</name>
    <name type="ordered locus">PG_1923</name>
</gene>
<sequence length="183" mass="20355">MSRIGKLPISIPAGVTVSHKDEIVTVKGPKGELSQYVDPRITVVIEGGMIHLERKTDDRIERSLHGLYRSLINNMVQGVSAGFKRELELVGVGYRASNQGQLLELSLGFTHSIFMQLPKEVTVETKSERNKNPLIILESADKQLLGQVCMKIRSFRKPEPYKGKGVKFVGEQIRRKSGKSAGK</sequence>
<organism>
    <name type="scientific">Porphyromonas gingivalis (strain ATCC BAA-308 / W83)</name>
    <dbReference type="NCBI Taxonomy" id="242619"/>
    <lineage>
        <taxon>Bacteria</taxon>
        <taxon>Pseudomonadati</taxon>
        <taxon>Bacteroidota</taxon>
        <taxon>Bacteroidia</taxon>
        <taxon>Bacteroidales</taxon>
        <taxon>Porphyromonadaceae</taxon>
        <taxon>Porphyromonas</taxon>
    </lineage>
</organism>
<dbReference type="EMBL" id="AE015924">
    <property type="protein sequence ID" value="AAQ66904.1"/>
    <property type="molecule type" value="Genomic_DNA"/>
</dbReference>
<dbReference type="RefSeq" id="WP_010956443.1">
    <property type="nucleotide sequence ID" value="NC_002950.2"/>
</dbReference>
<dbReference type="SMR" id="Q7MTM8"/>
<dbReference type="STRING" id="242619.PG_1923"/>
<dbReference type="EnsemblBacteria" id="AAQ66904">
    <property type="protein sequence ID" value="AAQ66904"/>
    <property type="gene ID" value="PG_1923"/>
</dbReference>
<dbReference type="GeneID" id="29257004"/>
<dbReference type="KEGG" id="pgi:PG_1923"/>
<dbReference type="eggNOG" id="COG0097">
    <property type="taxonomic scope" value="Bacteria"/>
</dbReference>
<dbReference type="HOGENOM" id="CLU_065464_1_2_10"/>
<dbReference type="Proteomes" id="UP000000588">
    <property type="component" value="Chromosome"/>
</dbReference>
<dbReference type="GO" id="GO:0022625">
    <property type="term" value="C:cytosolic large ribosomal subunit"/>
    <property type="evidence" value="ECO:0007669"/>
    <property type="project" value="TreeGrafter"/>
</dbReference>
<dbReference type="GO" id="GO:0019843">
    <property type="term" value="F:rRNA binding"/>
    <property type="evidence" value="ECO:0007669"/>
    <property type="project" value="UniProtKB-UniRule"/>
</dbReference>
<dbReference type="GO" id="GO:0003735">
    <property type="term" value="F:structural constituent of ribosome"/>
    <property type="evidence" value="ECO:0007669"/>
    <property type="project" value="InterPro"/>
</dbReference>
<dbReference type="GO" id="GO:0002181">
    <property type="term" value="P:cytoplasmic translation"/>
    <property type="evidence" value="ECO:0007669"/>
    <property type="project" value="TreeGrafter"/>
</dbReference>
<dbReference type="FunFam" id="3.90.930.12:FF:000002">
    <property type="entry name" value="50S ribosomal protein L6"/>
    <property type="match status" value="1"/>
</dbReference>
<dbReference type="FunFam" id="3.90.930.12:FF:000006">
    <property type="entry name" value="50S ribosomal protein L6"/>
    <property type="match status" value="1"/>
</dbReference>
<dbReference type="Gene3D" id="3.90.930.12">
    <property type="entry name" value="Ribosomal protein L6, alpha-beta domain"/>
    <property type="match status" value="2"/>
</dbReference>
<dbReference type="HAMAP" id="MF_01365_B">
    <property type="entry name" value="Ribosomal_uL6_B"/>
    <property type="match status" value="1"/>
</dbReference>
<dbReference type="InterPro" id="IPR000702">
    <property type="entry name" value="Ribosomal_uL6-like"/>
</dbReference>
<dbReference type="InterPro" id="IPR036789">
    <property type="entry name" value="Ribosomal_uL6-like_a/b-dom_sf"/>
</dbReference>
<dbReference type="InterPro" id="IPR020040">
    <property type="entry name" value="Ribosomal_uL6_a/b-dom"/>
</dbReference>
<dbReference type="InterPro" id="IPR019906">
    <property type="entry name" value="Ribosomal_uL6_bac-type"/>
</dbReference>
<dbReference type="InterPro" id="IPR002358">
    <property type="entry name" value="Ribosomal_uL6_CS"/>
</dbReference>
<dbReference type="NCBIfam" id="TIGR03654">
    <property type="entry name" value="L6_bact"/>
    <property type="match status" value="1"/>
</dbReference>
<dbReference type="PANTHER" id="PTHR11655">
    <property type="entry name" value="60S/50S RIBOSOMAL PROTEIN L6/L9"/>
    <property type="match status" value="1"/>
</dbReference>
<dbReference type="PANTHER" id="PTHR11655:SF14">
    <property type="entry name" value="LARGE RIBOSOMAL SUBUNIT PROTEIN UL6M"/>
    <property type="match status" value="1"/>
</dbReference>
<dbReference type="Pfam" id="PF00347">
    <property type="entry name" value="Ribosomal_L6"/>
    <property type="match status" value="2"/>
</dbReference>
<dbReference type="PIRSF" id="PIRSF002162">
    <property type="entry name" value="Ribosomal_L6"/>
    <property type="match status" value="1"/>
</dbReference>
<dbReference type="PRINTS" id="PR00059">
    <property type="entry name" value="RIBOSOMALL6"/>
</dbReference>
<dbReference type="SUPFAM" id="SSF56053">
    <property type="entry name" value="Ribosomal protein L6"/>
    <property type="match status" value="2"/>
</dbReference>
<dbReference type="PROSITE" id="PS00525">
    <property type="entry name" value="RIBOSOMAL_L6_1"/>
    <property type="match status" value="1"/>
</dbReference>
<feature type="chain" id="PRO_0000265274" description="Large ribosomal subunit protein uL6">
    <location>
        <begin position="1"/>
        <end position="183"/>
    </location>
</feature>
<reference key="1">
    <citation type="journal article" date="2003" name="J. Bacteriol.">
        <title>Complete genome sequence of the oral pathogenic bacterium Porphyromonas gingivalis strain W83.</title>
        <authorList>
            <person name="Nelson K.E."/>
            <person name="Fleischmann R.D."/>
            <person name="DeBoy R.T."/>
            <person name="Paulsen I.T."/>
            <person name="Fouts D.E."/>
            <person name="Eisen J.A."/>
            <person name="Daugherty S.C."/>
            <person name="Dodson R.J."/>
            <person name="Durkin A.S."/>
            <person name="Gwinn M.L."/>
            <person name="Haft D.H."/>
            <person name="Kolonay J.F."/>
            <person name="Nelson W.C."/>
            <person name="Mason T.M."/>
            <person name="Tallon L."/>
            <person name="Gray J."/>
            <person name="Granger D."/>
            <person name="Tettelin H."/>
            <person name="Dong H."/>
            <person name="Galvin J.L."/>
            <person name="Duncan M.J."/>
            <person name="Dewhirst F.E."/>
            <person name="Fraser C.M."/>
        </authorList>
    </citation>
    <scope>NUCLEOTIDE SEQUENCE [LARGE SCALE GENOMIC DNA]</scope>
    <source>
        <strain>ATCC BAA-308 / W83</strain>
    </source>
</reference>
<keyword id="KW-1185">Reference proteome</keyword>
<keyword id="KW-0687">Ribonucleoprotein</keyword>
<keyword id="KW-0689">Ribosomal protein</keyword>
<keyword id="KW-0694">RNA-binding</keyword>
<keyword id="KW-0699">rRNA-binding</keyword>
<accession>Q7MTM8</accession>
<comment type="function">
    <text evidence="1">This protein binds to the 23S rRNA, and is important in its secondary structure. It is located near the subunit interface in the base of the L7/L12 stalk, and near the tRNA binding site of the peptidyltransferase center.</text>
</comment>
<comment type="subunit">
    <text evidence="1">Part of the 50S ribosomal subunit.</text>
</comment>
<comment type="similarity">
    <text evidence="1">Belongs to the universal ribosomal protein uL6 family.</text>
</comment>
<evidence type="ECO:0000255" key="1">
    <source>
        <dbReference type="HAMAP-Rule" id="MF_01365"/>
    </source>
</evidence>
<evidence type="ECO:0000305" key="2"/>
<name>RL6_PORGI</name>
<proteinExistence type="inferred from homology"/>